<dbReference type="EMBL" id="AY380334">
    <property type="protein sequence ID" value="AAR28441.1"/>
    <property type="molecule type" value="mRNA"/>
</dbReference>
<dbReference type="EMBL" id="AC007265">
    <property type="protein sequence ID" value="AAM15473.1"/>
    <property type="molecule type" value="Genomic_DNA"/>
</dbReference>
<dbReference type="EMBL" id="CP002685">
    <property type="protein sequence ID" value="AEC05521.1"/>
    <property type="molecule type" value="Genomic_DNA"/>
</dbReference>
<dbReference type="EMBL" id="CP002685">
    <property type="protein sequence ID" value="AEC05522.1"/>
    <property type="molecule type" value="Genomic_DNA"/>
</dbReference>
<dbReference type="EMBL" id="AY065225">
    <property type="protein sequence ID" value="AAL38701.1"/>
    <property type="molecule type" value="mRNA"/>
</dbReference>
<dbReference type="EMBL" id="AY096550">
    <property type="protein sequence ID" value="AAM20200.1"/>
    <property type="molecule type" value="mRNA"/>
</dbReference>
<dbReference type="EMBL" id="AK317471">
    <property type="protein sequence ID" value="BAH20136.1"/>
    <property type="molecule type" value="mRNA"/>
</dbReference>
<dbReference type="EMBL" id="AY088464">
    <property type="protein sequence ID" value="AAM66000.1"/>
    <property type="molecule type" value="mRNA"/>
</dbReference>
<dbReference type="PIR" id="H84430">
    <property type="entry name" value="H84430"/>
</dbReference>
<dbReference type="RefSeq" id="NP_565279.1">
    <property type="nucleotide sequence ID" value="NM_126254.3"/>
</dbReference>
<dbReference type="RefSeq" id="NP_973398.1">
    <property type="nucleotide sequence ID" value="NM_201669.2"/>
</dbReference>
<dbReference type="BioGRID" id="127">
    <property type="interactions" value="11"/>
</dbReference>
<dbReference type="FunCoup" id="Q9SKD0">
    <property type="interactions" value="739"/>
</dbReference>
<dbReference type="IntAct" id="Q9SKD0">
    <property type="interactions" value="8"/>
</dbReference>
<dbReference type="STRING" id="3702.Q9SKD0"/>
<dbReference type="iPTMnet" id="Q9SKD0"/>
<dbReference type="PaxDb" id="3702-AT2G01930.2"/>
<dbReference type="ProteomicsDB" id="240806"/>
<dbReference type="EnsemblPlants" id="AT2G01930.1">
    <property type="protein sequence ID" value="AT2G01930.1"/>
    <property type="gene ID" value="AT2G01930"/>
</dbReference>
<dbReference type="EnsemblPlants" id="AT2G01930.2">
    <property type="protein sequence ID" value="AT2G01930.2"/>
    <property type="gene ID" value="AT2G01930"/>
</dbReference>
<dbReference type="GeneID" id="814724"/>
<dbReference type="Gramene" id="AT2G01930.1">
    <property type="protein sequence ID" value="AT2G01930.1"/>
    <property type="gene ID" value="AT2G01930"/>
</dbReference>
<dbReference type="Gramene" id="AT2G01930.2">
    <property type="protein sequence ID" value="AT2G01930.2"/>
    <property type="gene ID" value="AT2G01930"/>
</dbReference>
<dbReference type="KEGG" id="ath:AT2G01930"/>
<dbReference type="Araport" id="AT2G01930"/>
<dbReference type="TAIR" id="AT2G01930">
    <property type="gene designation" value="BPC1"/>
</dbReference>
<dbReference type="eggNOG" id="ENOG502QRPH">
    <property type="taxonomic scope" value="Eukaryota"/>
</dbReference>
<dbReference type="HOGENOM" id="CLU_039119_2_0_1"/>
<dbReference type="InParanoid" id="Q9SKD0"/>
<dbReference type="OMA" id="DMNYSWI"/>
<dbReference type="PhylomeDB" id="Q9SKD0"/>
<dbReference type="PRO" id="PR:Q9SKD0"/>
<dbReference type="Proteomes" id="UP000006548">
    <property type="component" value="Chromosome 2"/>
</dbReference>
<dbReference type="ExpressionAtlas" id="Q9SKD0">
    <property type="expression patterns" value="baseline and differential"/>
</dbReference>
<dbReference type="GO" id="GO:0005634">
    <property type="term" value="C:nucleus"/>
    <property type="evidence" value="ECO:0000314"/>
    <property type="project" value="TAIR"/>
</dbReference>
<dbReference type="GO" id="GO:0000987">
    <property type="term" value="F:cis-regulatory region sequence-specific DNA binding"/>
    <property type="evidence" value="ECO:0000314"/>
    <property type="project" value="TAIR"/>
</dbReference>
<dbReference type="GO" id="GO:0003677">
    <property type="term" value="F:DNA binding"/>
    <property type="evidence" value="ECO:0000314"/>
    <property type="project" value="TAIR"/>
</dbReference>
<dbReference type="GO" id="GO:0043565">
    <property type="term" value="F:sequence-specific DNA binding"/>
    <property type="evidence" value="ECO:0000314"/>
    <property type="project" value="UniProtKB"/>
</dbReference>
<dbReference type="GO" id="GO:1990837">
    <property type="term" value="F:sequence-specific double-stranded DNA binding"/>
    <property type="evidence" value="ECO:0000314"/>
    <property type="project" value="TAIR"/>
</dbReference>
<dbReference type="GO" id="GO:1901002">
    <property type="term" value="P:positive regulation of response to salt stress"/>
    <property type="evidence" value="ECO:0000316"/>
    <property type="project" value="TAIR"/>
</dbReference>
<dbReference type="GO" id="GO:0050793">
    <property type="term" value="P:regulation of developmental process"/>
    <property type="evidence" value="ECO:0000316"/>
    <property type="project" value="TAIR"/>
</dbReference>
<dbReference type="GO" id="GO:0080157">
    <property type="term" value="P:regulation of plant-type cell wall organization or biogenesis"/>
    <property type="evidence" value="ECO:0000316"/>
    <property type="project" value="TAIR"/>
</dbReference>
<dbReference type="GO" id="GO:0009723">
    <property type="term" value="P:response to ethylene"/>
    <property type="evidence" value="ECO:0000316"/>
    <property type="project" value="TAIR"/>
</dbReference>
<dbReference type="InterPro" id="IPR010409">
    <property type="entry name" value="GAGA-bd_tscrpt_act"/>
</dbReference>
<dbReference type="PANTHER" id="PTHR31421:SF0">
    <property type="entry name" value="PROTEIN BASIC PENTACYSTEINE1-RELATED"/>
    <property type="match status" value="1"/>
</dbReference>
<dbReference type="PANTHER" id="PTHR31421">
    <property type="entry name" value="PROTEIN BASIC PENTACYSTEINE3"/>
    <property type="match status" value="1"/>
</dbReference>
<dbReference type="Pfam" id="PF06217">
    <property type="entry name" value="GAGA_bind"/>
    <property type="match status" value="1"/>
</dbReference>
<dbReference type="SMART" id="SM01226">
    <property type="entry name" value="GAGA_bind"/>
    <property type="match status" value="1"/>
</dbReference>
<proteinExistence type="evidence at protein level"/>
<evidence type="ECO:0000250" key="1"/>
<evidence type="ECO:0000256" key="2">
    <source>
        <dbReference type="SAM" id="MobiDB-lite"/>
    </source>
</evidence>
<evidence type="ECO:0000269" key="3">
    <source>
    </source>
</evidence>
<evidence type="ECO:0000269" key="4">
    <source>
    </source>
</evidence>
<evidence type="ECO:0000269" key="5">
    <source>
    </source>
</evidence>
<evidence type="ECO:0000305" key="6"/>
<name>BPC1_ARATH</name>
<gene>
    <name type="primary">BPC1</name>
    <name type="ordered locus">At2g01930</name>
    <name type="ORF">F23I14.2</name>
</gene>
<keyword id="KW-0238">DNA-binding</keyword>
<keyword id="KW-0539">Nucleus</keyword>
<keyword id="KW-1185">Reference proteome</keyword>
<keyword id="KW-0804">Transcription</keyword>
<keyword id="KW-0805">Transcription regulation</keyword>
<comment type="function">
    <text evidence="3 4">Transcriptional regulator that specifically binds to GA-rich elements (GAGA-repeats) present in regulatory sequences of genes involved in developmental processes. Negatively regulates the homeotic gene AGL11/STK, which controls ovule primordium identity, by a cooperative binding to purine-rich elements present in the regulatory sequence leading to DNA conformational changes.</text>
</comment>
<comment type="subcellular location">
    <subcellularLocation>
        <location evidence="1">Nucleus</location>
    </subcellularLocation>
</comment>
<comment type="tissue specificity">
    <text evidence="3 5">Expressed in seedlings, leaves and pistils. Detected in the base of flowers and tips of carpels, in leaf and sepal vasculature, in young rosette, in the lateral and tip of primary roots, and in the whole ovule.</text>
</comment>
<comment type="developmental stage">
    <text evidence="4">Early detected in the floral meristem and floral organ primordia. At later stages, expressed in all floral organs and in particular in the ovule.</text>
</comment>
<comment type="similarity">
    <text evidence="6">Belongs to the BBR/BPC family.</text>
</comment>
<accession>Q9SKD0</accession>
<accession>Q6U1Z7</accession>
<accession>Q8L9F3</accession>
<organism>
    <name type="scientific">Arabidopsis thaliana</name>
    <name type="common">Mouse-ear cress</name>
    <dbReference type="NCBI Taxonomy" id="3702"/>
    <lineage>
        <taxon>Eukaryota</taxon>
        <taxon>Viridiplantae</taxon>
        <taxon>Streptophyta</taxon>
        <taxon>Embryophyta</taxon>
        <taxon>Tracheophyta</taxon>
        <taxon>Spermatophyta</taxon>
        <taxon>Magnoliopsida</taxon>
        <taxon>eudicotyledons</taxon>
        <taxon>Gunneridae</taxon>
        <taxon>Pentapetalae</taxon>
        <taxon>rosids</taxon>
        <taxon>malvids</taxon>
        <taxon>Brassicales</taxon>
        <taxon>Brassicaceae</taxon>
        <taxon>Camelineae</taxon>
        <taxon>Arabidopsis</taxon>
    </lineage>
</organism>
<reference key="1">
    <citation type="journal article" date="2004" name="Plant J.">
        <title>Definition and interactions of a positive regulatory element of the Arabidopsis INNER NO OUTER promoter.</title>
        <authorList>
            <person name="Meister R.J."/>
            <person name="Williams L.A."/>
            <person name="Monfared M.M."/>
            <person name="Gallagher T.L."/>
            <person name="Kraft E.A."/>
            <person name="Nelson C.G."/>
            <person name="Gasser C.S."/>
        </authorList>
    </citation>
    <scope>NUCLEOTIDE SEQUENCE [MRNA]</scope>
    <scope>FUNCTION</scope>
    <scope>DNA-BINDING</scope>
    <scope>TISSUE SPECIFICITY</scope>
    <source>
        <strain>cv. Landsberg erecta</strain>
    </source>
</reference>
<reference key="2">
    <citation type="journal article" date="1999" name="Nature">
        <title>Sequence and analysis of chromosome 2 of the plant Arabidopsis thaliana.</title>
        <authorList>
            <person name="Lin X."/>
            <person name="Kaul S."/>
            <person name="Rounsley S.D."/>
            <person name="Shea T.P."/>
            <person name="Benito M.-I."/>
            <person name="Town C.D."/>
            <person name="Fujii C.Y."/>
            <person name="Mason T.M."/>
            <person name="Bowman C.L."/>
            <person name="Barnstead M.E."/>
            <person name="Feldblyum T.V."/>
            <person name="Buell C.R."/>
            <person name="Ketchum K.A."/>
            <person name="Lee J.J."/>
            <person name="Ronning C.M."/>
            <person name="Koo H.L."/>
            <person name="Moffat K.S."/>
            <person name="Cronin L.A."/>
            <person name="Shen M."/>
            <person name="Pai G."/>
            <person name="Van Aken S."/>
            <person name="Umayam L."/>
            <person name="Tallon L.J."/>
            <person name="Gill J.E."/>
            <person name="Adams M.D."/>
            <person name="Carrera A.J."/>
            <person name="Creasy T.H."/>
            <person name="Goodman H.M."/>
            <person name="Somerville C.R."/>
            <person name="Copenhaver G.P."/>
            <person name="Preuss D."/>
            <person name="Nierman W.C."/>
            <person name="White O."/>
            <person name="Eisen J.A."/>
            <person name="Salzberg S.L."/>
            <person name="Fraser C.M."/>
            <person name="Venter J.C."/>
        </authorList>
    </citation>
    <scope>NUCLEOTIDE SEQUENCE [LARGE SCALE GENOMIC DNA]</scope>
    <source>
        <strain>cv. Columbia</strain>
    </source>
</reference>
<reference key="3">
    <citation type="journal article" date="2017" name="Plant J.">
        <title>Araport11: a complete reannotation of the Arabidopsis thaliana reference genome.</title>
        <authorList>
            <person name="Cheng C.Y."/>
            <person name="Krishnakumar V."/>
            <person name="Chan A.P."/>
            <person name="Thibaud-Nissen F."/>
            <person name="Schobel S."/>
            <person name="Town C.D."/>
        </authorList>
    </citation>
    <scope>GENOME REANNOTATION</scope>
    <source>
        <strain>cv. Columbia</strain>
    </source>
</reference>
<reference key="4">
    <citation type="journal article" date="2003" name="Science">
        <title>Empirical analysis of transcriptional activity in the Arabidopsis genome.</title>
        <authorList>
            <person name="Yamada K."/>
            <person name="Lim J."/>
            <person name="Dale J.M."/>
            <person name="Chen H."/>
            <person name="Shinn P."/>
            <person name="Palm C.J."/>
            <person name="Southwick A.M."/>
            <person name="Wu H.C."/>
            <person name="Kim C.J."/>
            <person name="Nguyen M."/>
            <person name="Pham P.K."/>
            <person name="Cheuk R.F."/>
            <person name="Karlin-Newmann G."/>
            <person name="Liu S.X."/>
            <person name="Lam B."/>
            <person name="Sakano H."/>
            <person name="Wu T."/>
            <person name="Yu G."/>
            <person name="Miranda M."/>
            <person name="Quach H.L."/>
            <person name="Tripp M."/>
            <person name="Chang C.H."/>
            <person name="Lee J.M."/>
            <person name="Toriumi M.J."/>
            <person name="Chan M.M."/>
            <person name="Tang C.C."/>
            <person name="Onodera C.S."/>
            <person name="Deng J.M."/>
            <person name="Akiyama K."/>
            <person name="Ansari Y."/>
            <person name="Arakawa T."/>
            <person name="Banh J."/>
            <person name="Banno F."/>
            <person name="Bowser L."/>
            <person name="Brooks S.Y."/>
            <person name="Carninci P."/>
            <person name="Chao Q."/>
            <person name="Choy N."/>
            <person name="Enju A."/>
            <person name="Goldsmith A.D."/>
            <person name="Gurjal M."/>
            <person name="Hansen N.F."/>
            <person name="Hayashizaki Y."/>
            <person name="Johnson-Hopson C."/>
            <person name="Hsuan V.W."/>
            <person name="Iida K."/>
            <person name="Karnes M."/>
            <person name="Khan S."/>
            <person name="Koesema E."/>
            <person name="Ishida J."/>
            <person name="Jiang P.X."/>
            <person name="Jones T."/>
            <person name="Kawai J."/>
            <person name="Kamiya A."/>
            <person name="Meyers C."/>
            <person name="Nakajima M."/>
            <person name="Narusaka M."/>
            <person name="Seki M."/>
            <person name="Sakurai T."/>
            <person name="Satou M."/>
            <person name="Tamse R."/>
            <person name="Vaysberg M."/>
            <person name="Wallender E.K."/>
            <person name="Wong C."/>
            <person name="Yamamura Y."/>
            <person name="Yuan S."/>
            <person name="Shinozaki K."/>
            <person name="Davis R.W."/>
            <person name="Theologis A."/>
            <person name="Ecker J.R."/>
        </authorList>
    </citation>
    <scope>NUCLEOTIDE SEQUENCE [LARGE SCALE MRNA]</scope>
    <source>
        <strain>cv. Columbia</strain>
    </source>
</reference>
<reference key="5">
    <citation type="journal article" date="2009" name="DNA Res.">
        <title>Analysis of multiple occurrences of alternative splicing events in Arabidopsis thaliana using novel sequenced full-length cDNAs.</title>
        <authorList>
            <person name="Iida K."/>
            <person name="Fukami-Kobayashi K."/>
            <person name="Toyoda A."/>
            <person name="Sakaki Y."/>
            <person name="Kobayashi M."/>
            <person name="Seki M."/>
            <person name="Shinozaki K."/>
        </authorList>
    </citation>
    <scope>NUCLEOTIDE SEQUENCE [LARGE SCALE MRNA]</scope>
    <source>
        <strain>cv. Columbia</strain>
        <tissue>Rosette leaf</tissue>
    </source>
</reference>
<reference key="6">
    <citation type="submission" date="2002-03" db="EMBL/GenBank/DDBJ databases">
        <title>Full-length cDNA from Arabidopsis thaliana.</title>
        <authorList>
            <person name="Brover V.V."/>
            <person name="Troukhan M.E."/>
            <person name="Alexandrov N.A."/>
            <person name="Lu Y.-P."/>
            <person name="Flavell R.B."/>
            <person name="Feldmann K.A."/>
        </authorList>
    </citation>
    <scope>NUCLEOTIDE SEQUENCE [LARGE SCALE MRNA]</scope>
</reference>
<reference key="7">
    <citation type="journal article" date="2005" name="Plant Cell">
        <title>BASIC PENTACYSTEINE1, a GA binding protein that induces conformational changes in the regulatory region of the homeotic Arabidopsis gene SEEDSTICK.</title>
        <authorList>
            <person name="Kooiker M."/>
            <person name="Airoldi C.A."/>
            <person name="Losa A."/>
            <person name="Manzotti P.S."/>
            <person name="Finzi L."/>
            <person name="Kater M.M."/>
            <person name="Colombo L."/>
        </authorList>
    </citation>
    <scope>FUNCTION</scope>
    <scope>DNA-BINDING</scope>
    <scope>DEVELOPMENTAL STAGE</scope>
</reference>
<reference key="8">
    <citation type="book" date="2009" name="Proceedings of the 20th international conference on Arabidopsis research">
        <title>The plant specific BPC/BBR family of GAGA-repeat binding proteins.</title>
        <authorList>
            <person name="Bloss U."/>
            <person name="Hohenstatt M.L."/>
            <person name="Hummel S."/>
            <person name="Harter K."/>
            <person name="Wanke D."/>
        </authorList>
    </citation>
    <scope>GENE FAMILY</scope>
</reference>
<reference key="9">
    <citation type="journal article" date="2011" name="Plant J.">
        <title>Overlapping and antagonistic activities of BASIC PENTACYSTEINE genes affect a range of developmental processes in Arabidopsis.</title>
        <authorList>
            <person name="Monfared M.M."/>
            <person name="Simon M.K."/>
            <person name="Meister R.J."/>
            <person name="Roig-Villanova I."/>
            <person name="Kooiker M."/>
            <person name="Colombo L."/>
            <person name="Fletcher J.C."/>
            <person name="Gasser C.S."/>
        </authorList>
    </citation>
    <scope>TISSUE SPECIFICITY</scope>
</reference>
<feature type="chain" id="PRO_0000413435" description="Protein BASIC PENTACYSTEINE1">
    <location>
        <begin position="1"/>
        <end position="283"/>
    </location>
</feature>
<feature type="region of interest" description="Disordered" evidence="2">
    <location>
        <begin position="111"/>
        <end position="170"/>
    </location>
</feature>
<feature type="compositionally biased region" description="Low complexity" evidence="2">
    <location>
        <begin position="158"/>
        <end position="169"/>
    </location>
</feature>
<feature type="sequence variant" description="In strain: cv. Landsberg erecta.">
    <original>N</original>
    <variation>T</variation>
    <location>
        <position position="88"/>
    </location>
</feature>
<feature type="sequence conflict" description="In Ref. 6; AAM66000." evidence="6" ref="6">
    <original>Q</original>
    <variation>H</variation>
    <location>
        <position position="100"/>
    </location>
</feature>
<feature type="sequence conflict" description="In Ref. 6; AAM66000." evidence="6" ref="6">
    <original>P</original>
    <variation>A</variation>
    <location>
        <position position="120"/>
    </location>
</feature>
<feature type="sequence conflict" description="In Ref. 6; AAM66000." evidence="6" ref="6">
    <original>Q</original>
    <variation>QQK</variation>
    <location>
        <position position="166"/>
    </location>
</feature>
<sequence>MDDDGFRNWGYYEPAAASSFKGNLGLQLMSTIDRNTKPFLPGRESNLMIGSNGSYHSREQDMNYSWINQPKDNKFFNMLPISTPSYSNVLSETSGSNSIQMIHQPVLNSSRFEENPIPPPAPCEEQTGKKRKMRGSIATPTVPKAKKMRKPKEERDVTNNNVQQQQQRVKPVKKSVDLVINGVSMDISGLPVPVCTCTGTPQQCYRWGCGGWQSACCTTNISVYPLPMSTKRRGARISGRKMSQGAFKKVLEKLSTEGYSFGNAIDLKSHWARHGTNKFVTIR</sequence>
<protein>
    <recommendedName>
        <fullName>Protein BASIC PENTACYSTEINE1</fullName>
        <shortName>AtBPC1</shortName>
    </recommendedName>
</protein>